<feature type="chain" id="PRO_0000063298" description="Chaperonin GroEL 5">
    <location>
        <begin position="1"/>
        <end position="541"/>
    </location>
</feature>
<feature type="binding site" evidence="1">
    <location>
        <begin position="30"/>
        <end position="33"/>
    </location>
    <ligand>
        <name>ATP</name>
        <dbReference type="ChEBI" id="CHEBI:30616"/>
    </ligand>
</feature>
<feature type="binding site" evidence="1">
    <location>
        <position position="415"/>
    </location>
    <ligand>
        <name>ATP</name>
        <dbReference type="ChEBI" id="CHEBI:30616"/>
    </ligand>
</feature>
<feature type="binding site" evidence="1">
    <location>
        <position position="496"/>
    </location>
    <ligand>
        <name>ATP</name>
        <dbReference type="ChEBI" id="CHEBI:30616"/>
    </ligand>
</feature>
<dbReference type="EC" id="5.6.1.7" evidence="1"/>
<dbReference type="EMBL" id="BA000040">
    <property type="protein sequence ID" value="BAC49900.1"/>
    <property type="molecule type" value="Genomic_DNA"/>
</dbReference>
<dbReference type="RefSeq" id="NP_771275.1">
    <property type="nucleotide sequence ID" value="NC_004463.1"/>
</dbReference>
<dbReference type="RefSeq" id="WP_011087406.1">
    <property type="nucleotide sequence ID" value="NC_004463.1"/>
</dbReference>
<dbReference type="SMR" id="Q89LB1"/>
<dbReference type="STRING" id="224911.AAV28_20425"/>
<dbReference type="EnsemblBacteria" id="BAC49900">
    <property type="protein sequence ID" value="BAC49900"/>
    <property type="gene ID" value="BAC49900"/>
</dbReference>
<dbReference type="GeneID" id="46491641"/>
<dbReference type="KEGG" id="bja:blr4635"/>
<dbReference type="PATRIC" id="fig|224911.44.peg.4446"/>
<dbReference type="eggNOG" id="COG0459">
    <property type="taxonomic scope" value="Bacteria"/>
</dbReference>
<dbReference type="HOGENOM" id="CLU_016503_3_0_5"/>
<dbReference type="InParanoid" id="Q89LB1"/>
<dbReference type="OrthoDB" id="8325718at2"/>
<dbReference type="PhylomeDB" id="Q89LB1"/>
<dbReference type="Proteomes" id="UP000002526">
    <property type="component" value="Chromosome"/>
</dbReference>
<dbReference type="GO" id="GO:1990220">
    <property type="term" value="C:GroEL-GroES complex"/>
    <property type="evidence" value="ECO:0000318"/>
    <property type="project" value="GO_Central"/>
</dbReference>
<dbReference type="GO" id="GO:0005524">
    <property type="term" value="F:ATP binding"/>
    <property type="evidence" value="ECO:0000318"/>
    <property type="project" value="GO_Central"/>
</dbReference>
<dbReference type="GO" id="GO:0140662">
    <property type="term" value="F:ATP-dependent protein folding chaperone"/>
    <property type="evidence" value="ECO:0007669"/>
    <property type="project" value="InterPro"/>
</dbReference>
<dbReference type="GO" id="GO:0016853">
    <property type="term" value="F:isomerase activity"/>
    <property type="evidence" value="ECO:0007669"/>
    <property type="project" value="UniProtKB-KW"/>
</dbReference>
<dbReference type="GO" id="GO:0051082">
    <property type="term" value="F:unfolded protein binding"/>
    <property type="evidence" value="ECO:0000318"/>
    <property type="project" value="GO_Central"/>
</dbReference>
<dbReference type="GO" id="GO:0051085">
    <property type="term" value="P:chaperone cofactor-dependent protein refolding"/>
    <property type="evidence" value="ECO:0000318"/>
    <property type="project" value="GO_Central"/>
</dbReference>
<dbReference type="GO" id="GO:0042026">
    <property type="term" value="P:protein refolding"/>
    <property type="evidence" value="ECO:0007669"/>
    <property type="project" value="UniProtKB-UniRule"/>
</dbReference>
<dbReference type="GO" id="GO:0009408">
    <property type="term" value="P:response to heat"/>
    <property type="evidence" value="ECO:0000318"/>
    <property type="project" value="GO_Central"/>
</dbReference>
<dbReference type="CDD" id="cd03344">
    <property type="entry name" value="GroEL"/>
    <property type="match status" value="1"/>
</dbReference>
<dbReference type="FunFam" id="3.50.7.10:FF:000001">
    <property type="entry name" value="60 kDa chaperonin"/>
    <property type="match status" value="1"/>
</dbReference>
<dbReference type="Gene3D" id="3.50.7.10">
    <property type="entry name" value="GroEL"/>
    <property type="match status" value="1"/>
</dbReference>
<dbReference type="Gene3D" id="1.10.560.10">
    <property type="entry name" value="GroEL-like equatorial domain"/>
    <property type="match status" value="1"/>
</dbReference>
<dbReference type="Gene3D" id="3.30.260.10">
    <property type="entry name" value="TCP-1-like chaperonin intermediate domain"/>
    <property type="match status" value="1"/>
</dbReference>
<dbReference type="HAMAP" id="MF_00600">
    <property type="entry name" value="CH60"/>
    <property type="match status" value="1"/>
</dbReference>
<dbReference type="InterPro" id="IPR001844">
    <property type="entry name" value="Cpn60/GroEL"/>
</dbReference>
<dbReference type="InterPro" id="IPR002423">
    <property type="entry name" value="Cpn60/GroEL/TCP-1"/>
</dbReference>
<dbReference type="InterPro" id="IPR027409">
    <property type="entry name" value="GroEL-like_apical_dom_sf"/>
</dbReference>
<dbReference type="InterPro" id="IPR027413">
    <property type="entry name" value="GROEL-like_equatorial_sf"/>
</dbReference>
<dbReference type="InterPro" id="IPR027410">
    <property type="entry name" value="TCP-1-like_intermed_sf"/>
</dbReference>
<dbReference type="NCBIfam" id="TIGR02348">
    <property type="entry name" value="GroEL"/>
    <property type="match status" value="1"/>
</dbReference>
<dbReference type="NCBIfam" id="NF000592">
    <property type="entry name" value="PRK00013.1"/>
    <property type="match status" value="1"/>
</dbReference>
<dbReference type="NCBIfam" id="NF009487">
    <property type="entry name" value="PRK12849.1"/>
    <property type="match status" value="1"/>
</dbReference>
<dbReference type="NCBIfam" id="NF009488">
    <property type="entry name" value="PRK12850.1"/>
    <property type="match status" value="1"/>
</dbReference>
<dbReference type="NCBIfam" id="NF009489">
    <property type="entry name" value="PRK12851.1"/>
    <property type="match status" value="1"/>
</dbReference>
<dbReference type="PANTHER" id="PTHR45633">
    <property type="entry name" value="60 KDA HEAT SHOCK PROTEIN, MITOCHONDRIAL"/>
    <property type="match status" value="1"/>
</dbReference>
<dbReference type="Pfam" id="PF00118">
    <property type="entry name" value="Cpn60_TCP1"/>
    <property type="match status" value="1"/>
</dbReference>
<dbReference type="PRINTS" id="PR00298">
    <property type="entry name" value="CHAPERONIN60"/>
</dbReference>
<dbReference type="SUPFAM" id="SSF52029">
    <property type="entry name" value="GroEL apical domain-like"/>
    <property type="match status" value="1"/>
</dbReference>
<dbReference type="SUPFAM" id="SSF48592">
    <property type="entry name" value="GroEL equatorial domain-like"/>
    <property type="match status" value="1"/>
</dbReference>
<dbReference type="SUPFAM" id="SSF54849">
    <property type="entry name" value="GroEL-intermediate domain like"/>
    <property type="match status" value="1"/>
</dbReference>
<organism>
    <name type="scientific">Bradyrhizobium diazoefficiens (strain JCM 10833 / BCRC 13528 / IAM 13628 / NBRC 14792 / USDA 110)</name>
    <dbReference type="NCBI Taxonomy" id="224911"/>
    <lineage>
        <taxon>Bacteria</taxon>
        <taxon>Pseudomonadati</taxon>
        <taxon>Pseudomonadota</taxon>
        <taxon>Alphaproteobacteria</taxon>
        <taxon>Hyphomicrobiales</taxon>
        <taxon>Nitrobacteraceae</taxon>
        <taxon>Bradyrhizobium</taxon>
    </lineage>
</organism>
<proteinExistence type="inferred from homology"/>
<gene>
    <name evidence="1" type="primary">groEL5</name>
    <name evidence="1" type="synonym">groL5</name>
    <name type="ordered locus">blr4635</name>
</gene>
<protein>
    <recommendedName>
        <fullName evidence="1">Chaperonin GroEL 5</fullName>
        <ecNumber evidence="1">5.6.1.7</ecNumber>
    </recommendedName>
    <alternativeName>
        <fullName evidence="1">60 kDa chaperonin 5</fullName>
    </alternativeName>
    <alternativeName>
        <fullName evidence="1">Chaperonin-60 5</fullName>
        <shortName evidence="1">Cpn60 5</shortName>
    </alternativeName>
</protein>
<keyword id="KW-0067">ATP-binding</keyword>
<keyword id="KW-0143">Chaperone</keyword>
<keyword id="KW-0963">Cytoplasm</keyword>
<keyword id="KW-0413">Isomerase</keyword>
<keyword id="KW-0547">Nucleotide-binding</keyword>
<keyword id="KW-1185">Reference proteome</keyword>
<comment type="function">
    <text evidence="1">Together with its co-chaperonin GroES, plays an essential role in assisting protein folding. The GroEL-GroES system forms a nano-cage that allows encapsulation of the non-native substrate proteins and provides a physical environment optimized to promote and accelerate protein folding.</text>
</comment>
<comment type="catalytic activity">
    <reaction evidence="1">
        <text>ATP + H2O + a folded polypeptide = ADP + phosphate + an unfolded polypeptide.</text>
        <dbReference type="EC" id="5.6.1.7"/>
    </reaction>
</comment>
<comment type="subunit">
    <text evidence="1">Forms a cylinder of 14 subunits composed of two heptameric rings stacked back-to-back. Interacts with the co-chaperonin GroES.</text>
</comment>
<comment type="subcellular location">
    <subcellularLocation>
        <location evidence="1">Cytoplasm</location>
    </subcellularLocation>
</comment>
<comment type="similarity">
    <text evidence="1">Belongs to the chaperonin (HSP60) family.</text>
</comment>
<reference key="1">
    <citation type="journal article" date="2002" name="DNA Res.">
        <title>Complete genomic sequence of nitrogen-fixing symbiotic bacterium Bradyrhizobium japonicum USDA110.</title>
        <authorList>
            <person name="Kaneko T."/>
            <person name="Nakamura Y."/>
            <person name="Sato S."/>
            <person name="Minamisawa K."/>
            <person name="Uchiumi T."/>
            <person name="Sasamoto S."/>
            <person name="Watanabe A."/>
            <person name="Idesawa K."/>
            <person name="Iriguchi M."/>
            <person name="Kawashima K."/>
            <person name="Kohara M."/>
            <person name="Matsumoto M."/>
            <person name="Shimpo S."/>
            <person name="Tsuruoka H."/>
            <person name="Wada T."/>
            <person name="Yamada M."/>
            <person name="Tabata S."/>
        </authorList>
    </citation>
    <scope>NUCLEOTIDE SEQUENCE [LARGE SCALE GENOMIC DNA]</scope>
    <source>
        <strain>JCM 10833 / BCRC 13528 / IAM 13628 / NBRC 14792 / USDA 110</strain>
    </source>
</reference>
<evidence type="ECO:0000255" key="1">
    <source>
        <dbReference type="HAMAP-Rule" id="MF_00600"/>
    </source>
</evidence>
<name>CH605_BRADU</name>
<sequence>MAHKQVLFHSAAREKILRGASLLADAVRVTLGPKSKSVLIQKGWGAPIVCNDGVTIAKEFDLKDAEENLGAQVLRQLAEKTGDVVGDGTSTSTILAHAILSDGVRNVVAGASAIDLKRGLDRGTQAAIAALRAMATPVKSRAEKVQVATISAHNDASIGELVADAIEKVGGDGVISVEESKTTETLLDVVEGMKFDRGFLSPYFITDADRMESVLQDPYVLLCDHKIGALRDLVPLLEQVAKSGQPLLIIAEDIEGEALATLIVNQLRGVLKACAVKAPGFGDRRKAMLEDIAILTGAQVISEEIGLNLENATLQQLGRAARVVADKENTTLIGSGGDRTRIDARLGQIRVEIEKTTSDYDREKLEERLAKLSGGVAVIRVGAPTEAEMKAKKEALDDAISSTKAAVAEGIVPGGGLALLRAVAAVAKEEAACEGDERTGVQILRRALEAPARQIAENSAADGGVVVARMLEGEGSIGFDASRKVYVDLVAAGIVDPVKVVRTALENAVSVASVLLLTEATMTEIPEPKRERLPEPDLAVQ</sequence>
<accession>Q89LB1</accession>